<evidence type="ECO:0000255" key="1">
    <source>
        <dbReference type="HAMAP-Rule" id="MF_01318"/>
    </source>
</evidence>
<evidence type="ECO:0000305" key="2"/>
<feature type="chain" id="PRO_1000141361" description="Large ribosomal subunit protein uL1">
    <location>
        <begin position="1"/>
        <end position="230"/>
    </location>
</feature>
<gene>
    <name evidence="1" type="primary">rplA</name>
    <name type="ordered locus">BcerKBAB4_0093</name>
</gene>
<organism>
    <name type="scientific">Bacillus mycoides (strain KBAB4)</name>
    <name type="common">Bacillus weihenstephanensis</name>
    <dbReference type="NCBI Taxonomy" id="315730"/>
    <lineage>
        <taxon>Bacteria</taxon>
        <taxon>Bacillati</taxon>
        <taxon>Bacillota</taxon>
        <taxon>Bacilli</taxon>
        <taxon>Bacillales</taxon>
        <taxon>Bacillaceae</taxon>
        <taxon>Bacillus</taxon>
        <taxon>Bacillus cereus group</taxon>
    </lineage>
</organism>
<comment type="function">
    <text evidence="1">Binds directly to 23S rRNA. The L1 stalk is quite mobile in the ribosome, and is involved in E site tRNA release.</text>
</comment>
<comment type="function">
    <text evidence="1">Protein L1 is also a translational repressor protein, it controls the translation of the L11 operon by binding to its mRNA.</text>
</comment>
<comment type="subunit">
    <text evidence="1">Part of the 50S ribosomal subunit.</text>
</comment>
<comment type="similarity">
    <text evidence="1">Belongs to the universal ribosomal protein uL1 family.</text>
</comment>
<reference key="1">
    <citation type="journal article" date="2008" name="Chem. Biol. Interact.">
        <title>Extending the Bacillus cereus group genomics to putative food-borne pathogens of different toxicity.</title>
        <authorList>
            <person name="Lapidus A."/>
            <person name="Goltsman E."/>
            <person name="Auger S."/>
            <person name="Galleron N."/>
            <person name="Segurens B."/>
            <person name="Dossat C."/>
            <person name="Land M.L."/>
            <person name="Broussolle V."/>
            <person name="Brillard J."/>
            <person name="Guinebretiere M.-H."/>
            <person name="Sanchis V."/>
            <person name="Nguen-the C."/>
            <person name="Lereclus D."/>
            <person name="Richardson P."/>
            <person name="Wincker P."/>
            <person name="Weissenbach J."/>
            <person name="Ehrlich S.D."/>
            <person name="Sorokin A."/>
        </authorList>
    </citation>
    <scope>NUCLEOTIDE SEQUENCE [LARGE SCALE GENOMIC DNA]</scope>
    <source>
        <strain>KBAB4</strain>
    </source>
</reference>
<name>RL1_BACMK</name>
<protein>
    <recommendedName>
        <fullName evidence="1">Large ribosomal subunit protein uL1</fullName>
    </recommendedName>
    <alternativeName>
        <fullName evidence="2">50S ribosomal protein L1</fullName>
    </alternativeName>
</protein>
<proteinExistence type="inferred from homology"/>
<dbReference type="EMBL" id="CP000903">
    <property type="protein sequence ID" value="ABY41362.1"/>
    <property type="molecule type" value="Genomic_DNA"/>
</dbReference>
<dbReference type="RefSeq" id="WP_002009792.1">
    <property type="nucleotide sequence ID" value="NZ_CAKMRX030000129.1"/>
</dbReference>
<dbReference type="SMR" id="A9VNB1"/>
<dbReference type="GeneID" id="66264833"/>
<dbReference type="KEGG" id="bwe:BcerKBAB4_0093"/>
<dbReference type="eggNOG" id="COG0081">
    <property type="taxonomic scope" value="Bacteria"/>
</dbReference>
<dbReference type="HOGENOM" id="CLU_062853_0_0_9"/>
<dbReference type="Proteomes" id="UP000002154">
    <property type="component" value="Chromosome"/>
</dbReference>
<dbReference type="GO" id="GO:0015934">
    <property type="term" value="C:large ribosomal subunit"/>
    <property type="evidence" value="ECO:0007669"/>
    <property type="project" value="InterPro"/>
</dbReference>
<dbReference type="GO" id="GO:0019843">
    <property type="term" value="F:rRNA binding"/>
    <property type="evidence" value="ECO:0007669"/>
    <property type="project" value="UniProtKB-UniRule"/>
</dbReference>
<dbReference type="GO" id="GO:0003735">
    <property type="term" value="F:structural constituent of ribosome"/>
    <property type="evidence" value="ECO:0007669"/>
    <property type="project" value="InterPro"/>
</dbReference>
<dbReference type="GO" id="GO:0000049">
    <property type="term" value="F:tRNA binding"/>
    <property type="evidence" value="ECO:0007669"/>
    <property type="project" value="UniProtKB-KW"/>
</dbReference>
<dbReference type="GO" id="GO:0006417">
    <property type="term" value="P:regulation of translation"/>
    <property type="evidence" value="ECO:0007669"/>
    <property type="project" value="UniProtKB-KW"/>
</dbReference>
<dbReference type="GO" id="GO:0006412">
    <property type="term" value="P:translation"/>
    <property type="evidence" value="ECO:0007669"/>
    <property type="project" value="UniProtKB-UniRule"/>
</dbReference>
<dbReference type="CDD" id="cd00403">
    <property type="entry name" value="Ribosomal_L1"/>
    <property type="match status" value="1"/>
</dbReference>
<dbReference type="FunFam" id="3.40.50.790:FF:000001">
    <property type="entry name" value="50S ribosomal protein L1"/>
    <property type="match status" value="1"/>
</dbReference>
<dbReference type="Gene3D" id="3.30.190.20">
    <property type="match status" value="1"/>
</dbReference>
<dbReference type="Gene3D" id="3.40.50.790">
    <property type="match status" value="1"/>
</dbReference>
<dbReference type="HAMAP" id="MF_01318_B">
    <property type="entry name" value="Ribosomal_uL1_B"/>
    <property type="match status" value="1"/>
</dbReference>
<dbReference type="InterPro" id="IPR005878">
    <property type="entry name" value="Ribosom_uL1_bac-type"/>
</dbReference>
<dbReference type="InterPro" id="IPR002143">
    <property type="entry name" value="Ribosomal_uL1"/>
</dbReference>
<dbReference type="InterPro" id="IPR023674">
    <property type="entry name" value="Ribosomal_uL1-like"/>
</dbReference>
<dbReference type="InterPro" id="IPR028364">
    <property type="entry name" value="Ribosomal_uL1/biogenesis"/>
</dbReference>
<dbReference type="InterPro" id="IPR016095">
    <property type="entry name" value="Ribosomal_uL1_3-a/b-sand"/>
</dbReference>
<dbReference type="InterPro" id="IPR023673">
    <property type="entry name" value="Ribosomal_uL1_CS"/>
</dbReference>
<dbReference type="NCBIfam" id="TIGR01169">
    <property type="entry name" value="rplA_bact"/>
    <property type="match status" value="1"/>
</dbReference>
<dbReference type="PANTHER" id="PTHR36427">
    <property type="entry name" value="54S RIBOSOMAL PROTEIN L1, MITOCHONDRIAL"/>
    <property type="match status" value="1"/>
</dbReference>
<dbReference type="PANTHER" id="PTHR36427:SF3">
    <property type="entry name" value="LARGE RIBOSOMAL SUBUNIT PROTEIN UL1M"/>
    <property type="match status" value="1"/>
</dbReference>
<dbReference type="Pfam" id="PF00687">
    <property type="entry name" value="Ribosomal_L1"/>
    <property type="match status" value="1"/>
</dbReference>
<dbReference type="PIRSF" id="PIRSF002155">
    <property type="entry name" value="Ribosomal_L1"/>
    <property type="match status" value="1"/>
</dbReference>
<dbReference type="SUPFAM" id="SSF56808">
    <property type="entry name" value="Ribosomal protein L1"/>
    <property type="match status" value="1"/>
</dbReference>
<dbReference type="PROSITE" id="PS01199">
    <property type="entry name" value="RIBOSOMAL_L1"/>
    <property type="match status" value="1"/>
</dbReference>
<keyword id="KW-0678">Repressor</keyword>
<keyword id="KW-0687">Ribonucleoprotein</keyword>
<keyword id="KW-0689">Ribosomal protein</keyword>
<keyword id="KW-0694">RNA-binding</keyword>
<keyword id="KW-0699">rRNA-binding</keyword>
<keyword id="KW-0810">Translation regulation</keyword>
<keyword id="KW-0820">tRNA-binding</keyword>
<accession>A9VNB1</accession>
<sequence>MAKRGKKYVEAAKLVDRASAYSATEAVELVKKTNTAKFDATVEAAFRLGVDPKKADQQIRGAVVLPHGTGKVQRVLVFAKGEKAKEAEAAGAEFVGDADYIGKIQKGWFDFDVVVATPDMMGEVGKLGRVLGPKGLMPNPKTGTVTFDVTKAVNEIKAGKVEYRVDKAGNIHVPIGKVSFEDAKLVENFKTIADTLQKAKPAAAKGTYMKNATVASTMGPGVRVDVSTLA</sequence>